<reference key="1">
    <citation type="journal article" date="1991" name="J. Virol.">
        <title>Biologic properties and nucleotide sequence analysis of human papillomavirus type 51.</title>
        <authorList>
            <person name="Lungu O."/>
            <person name="Crum C.P."/>
            <person name="Silverstein S.J."/>
        </authorList>
    </citation>
    <scope>NUCLEOTIDE SEQUENCE [GENOMIC DNA]</scope>
</reference>
<gene>
    <name evidence="1" type="primary">E1</name>
</gene>
<evidence type="ECO:0000255" key="1">
    <source>
        <dbReference type="HAMAP-Rule" id="MF_04000"/>
    </source>
</evidence>
<evidence type="ECO:0000256" key="2">
    <source>
        <dbReference type="SAM" id="MobiDB-lite"/>
    </source>
</evidence>
<keyword id="KW-0067">ATP-binding</keyword>
<keyword id="KW-0235">DNA replication</keyword>
<keyword id="KW-0238">DNA-binding</keyword>
<keyword id="KW-0244">Early protein</keyword>
<keyword id="KW-0347">Helicase</keyword>
<keyword id="KW-1048">Host nucleus</keyword>
<keyword id="KW-0378">Hydrolase</keyword>
<keyword id="KW-0413">Isomerase</keyword>
<keyword id="KW-0547">Nucleotide-binding</keyword>
<keyword id="KW-0597">Phosphoprotein</keyword>
<comment type="function">
    <text evidence="1">ATP-dependent DNA 3'-5' helicase required for initiation of viral DNA replication. It forms a complex with the viral E2 protein. The E1-E2 complex binds to the replication origin which contains binding sites for both proteins. During the initial step, a dimer of E1 interacts with a dimer of protein E2 leading to a complex that binds the viral origin of replication with high specificity. Then, a second dimer of E1 displaces the E2 dimer in an ATP-dependent manner to form the E1 tetramer. Following this, two E1 monomers are added to each half of the site, which results in the formation of two E1 trimers on the viral ori. Subsequently, two hexamers will be created. The double hexamer acts as a bi-directional helicase machinery and unwinds the viral DNA and then recruits the host DNA polymerase to start replication.</text>
</comment>
<comment type="catalytic activity">
    <reaction evidence="1">
        <text>Couples ATP hydrolysis with the unwinding of duplex DNA by translocating in the 3'-5' direction.</text>
        <dbReference type="EC" id="5.6.2.4"/>
    </reaction>
</comment>
<comment type="catalytic activity">
    <reaction evidence="1">
        <text>ATP + H2O = ADP + phosphate + H(+)</text>
        <dbReference type="Rhea" id="RHEA:13065"/>
        <dbReference type="ChEBI" id="CHEBI:15377"/>
        <dbReference type="ChEBI" id="CHEBI:15378"/>
        <dbReference type="ChEBI" id="CHEBI:30616"/>
        <dbReference type="ChEBI" id="CHEBI:43474"/>
        <dbReference type="ChEBI" id="CHEBI:456216"/>
        <dbReference type="EC" id="5.6.2.4"/>
    </reaction>
</comment>
<comment type="subunit">
    <text evidence="1">Can form hexamers. Interacts with E2 protein; this interaction increases E1 DNA binding specificity. Interacts with host DNA polymerase subunit POLA2. Interacts with host single stranded DNA-binding protein RPA1. Interacts with host TOP1; this interaction stimulates the enzymatic activity of TOP1.</text>
</comment>
<comment type="subcellular location">
    <subcellularLocation>
        <location evidence="1">Host nucleus</location>
    </subcellularLocation>
</comment>
<comment type="PTM">
    <text evidence="1">Phosphorylated.</text>
</comment>
<comment type="similarity">
    <text evidence="1">Belongs to the papillomaviridae E1 protein family.</text>
</comment>
<proteinExistence type="inferred from homology"/>
<accession>P26544</accession>
<name>VE1_HPV51</name>
<feature type="chain" id="PRO_0000133146" description="Replication protein E1">
    <location>
        <begin position="1"/>
        <end position="634"/>
    </location>
</feature>
<feature type="domain" description="SF3 helicase" evidence="1">
    <location>
        <begin position="437"/>
        <end position="587"/>
    </location>
</feature>
<feature type="region of interest" description="Disordered" evidence="2">
    <location>
        <begin position="92"/>
        <end position="117"/>
    </location>
</feature>
<feature type="region of interest" description="DNA-binding region" evidence="1">
    <location>
        <begin position="172"/>
        <end position="338"/>
    </location>
</feature>
<feature type="short sequence motif" description="Nuclear localization signal" evidence="1">
    <location>
        <begin position="85"/>
        <end position="87"/>
    </location>
</feature>
<feature type="compositionally biased region" description="Polar residues" evidence="2">
    <location>
        <begin position="100"/>
        <end position="115"/>
    </location>
</feature>
<feature type="binding site" evidence="1">
    <location>
        <begin position="463"/>
        <end position="470"/>
    </location>
    <ligand>
        <name>ATP</name>
        <dbReference type="ChEBI" id="CHEBI:30616"/>
    </ligand>
</feature>
<feature type="modified residue" description="Phosphoserine; by host" evidence="1">
    <location>
        <position position="91"/>
    </location>
</feature>
<feature type="modified residue" description="Phosphoserine; by host" evidence="1">
    <location>
        <position position="95"/>
    </location>
</feature>
<organismHost>
    <name type="scientific">Homo sapiens</name>
    <name type="common">Human</name>
    <dbReference type="NCBI Taxonomy" id="9606"/>
</organismHost>
<dbReference type="EC" id="5.6.2.4" evidence="1"/>
<dbReference type="EMBL" id="M62877">
    <property type="status" value="NOT_ANNOTATED_CDS"/>
    <property type="molecule type" value="Genomic_DNA"/>
</dbReference>
<dbReference type="PIR" id="A40415">
    <property type="entry name" value="W1WL51"/>
</dbReference>
<dbReference type="SMR" id="P26544"/>
<dbReference type="Proteomes" id="UP000009125">
    <property type="component" value="Segment"/>
</dbReference>
<dbReference type="GO" id="GO:0042025">
    <property type="term" value="C:host cell nucleus"/>
    <property type="evidence" value="ECO:0007669"/>
    <property type="project" value="UniProtKB-SubCell"/>
</dbReference>
<dbReference type="GO" id="GO:0005524">
    <property type="term" value="F:ATP binding"/>
    <property type="evidence" value="ECO:0007669"/>
    <property type="project" value="UniProtKB-UniRule"/>
</dbReference>
<dbReference type="GO" id="GO:0016887">
    <property type="term" value="F:ATP hydrolysis activity"/>
    <property type="evidence" value="ECO:0007669"/>
    <property type="project" value="RHEA"/>
</dbReference>
<dbReference type="GO" id="GO:0003677">
    <property type="term" value="F:DNA binding"/>
    <property type="evidence" value="ECO:0007669"/>
    <property type="project" value="UniProtKB-UniRule"/>
</dbReference>
<dbReference type="GO" id="GO:0003678">
    <property type="term" value="F:DNA helicase activity"/>
    <property type="evidence" value="ECO:0007669"/>
    <property type="project" value="UniProtKB-UniRule"/>
</dbReference>
<dbReference type="GO" id="GO:0006260">
    <property type="term" value="P:DNA replication"/>
    <property type="evidence" value="ECO:0007669"/>
    <property type="project" value="UniProtKB-UniRule"/>
</dbReference>
<dbReference type="Gene3D" id="3.40.1310.10">
    <property type="match status" value="1"/>
</dbReference>
<dbReference type="Gene3D" id="3.40.50.300">
    <property type="entry name" value="P-loop containing nucleotide triphosphate hydrolases"/>
    <property type="match status" value="1"/>
</dbReference>
<dbReference type="Gene3D" id="1.10.10.510">
    <property type="entry name" value="Zinc finger, large T-antigen D1 domain"/>
    <property type="match status" value="1"/>
</dbReference>
<dbReference type="HAMAP" id="MF_04000">
    <property type="entry name" value="PPV_E1"/>
    <property type="match status" value="1"/>
</dbReference>
<dbReference type="InterPro" id="IPR014015">
    <property type="entry name" value="Helicase_SF3_DNA-vir"/>
</dbReference>
<dbReference type="InterPro" id="IPR027417">
    <property type="entry name" value="P-loop_NTPase"/>
</dbReference>
<dbReference type="InterPro" id="IPR001177">
    <property type="entry name" value="PPV_DNA_helicase_E1_C"/>
</dbReference>
<dbReference type="InterPro" id="IPR014000">
    <property type="entry name" value="PPV_DNA_helicase_E1_N"/>
</dbReference>
<dbReference type="InterPro" id="IPR046832">
    <property type="entry name" value="PPV_E1_DBD"/>
</dbReference>
<dbReference type="InterPro" id="IPR046935">
    <property type="entry name" value="PPV_E1_DBD_sf"/>
</dbReference>
<dbReference type="InterPro" id="IPR016393">
    <property type="entry name" value="Rep_E1_papillomaV"/>
</dbReference>
<dbReference type="InterPro" id="IPR037102">
    <property type="entry name" value="Znf_lg_T-Ag_D1_dom_sf"/>
</dbReference>
<dbReference type="Pfam" id="PF00519">
    <property type="entry name" value="PPV_E1_C"/>
    <property type="match status" value="1"/>
</dbReference>
<dbReference type="Pfam" id="PF20450">
    <property type="entry name" value="PPV_E1_DBD"/>
    <property type="match status" value="1"/>
</dbReference>
<dbReference type="Pfam" id="PF00524">
    <property type="entry name" value="PPV_E1_N"/>
    <property type="match status" value="1"/>
</dbReference>
<dbReference type="PIRSF" id="PIRSF003383">
    <property type="entry name" value="Rep_E1_papillomaV"/>
    <property type="match status" value="1"/>
</dbReference>
<dbReference type="SUPFAM" id="SSF55464">
    <property type="entry name" value="Origin of replication-binding domain, RBD-like"/>
    <property type="match status" value="1"/>
</dbReference>
<dbReference type="SUPFAM" id="SSF52540">
    <property type="entry name" value="P-loop containing nucleoside triphosphate hydrolases"/>
    <property type="match status" value="1"/>
</dbReference>
<dbReference type="PROSITE" id="PS51206">
    <property type="entry name" value="SF3_HELICASE_1"/>
    <property type="match status" value="1"/>
</dbReference>
<organism>
    <name type="scientific">Human papillomavirus 51</name>
    <dbReference type="NCBI Taxonomy" id="10595"/>
    <lineage>
        <taxon>Viruses</taxon>
        <taxon>Monodnaviria</taxon>
        <taxon>Shotokuvirae</taxon>
        <taxon>Cossaviricota</taxon>
        <taxon>Papovaviricetes</taxon>
        <taxon>Zurhausenvirales</taxon>
        <taxon>Papillomaviridae</taxon>
        <taxon>Firstpapillomavirinae</taxon>
        <taxon>Alphapapillomavirus</taxon>
        <taxon>Alphapapillomavirus 5</taxon>
    </lineage>
</organism>
<protein>
    <recommendedName>
        <fullName evidence="1">Replication protein E1</fullName>
        <ecNumber evidence="1">5.6.2.4</ecNumber>
    </recommendedName>
    <alternativeName>
        <fullName evidence="1">ATP-dependent helicase E1</fullName>
    </alternativeName>
    <alternativeName>
        <fullName evidence="1">DNA 3'-5' helicase E1</fullName>
    </alternativeName>
</protein>
<sequence>MDCEGTEDEGAGCNGWFFVEAIVEKKTGDNVSDDEDENADDTGSDLINFIDSETSICSQAEQETARALFQAQELQANKEAVHQLKRKFLVSPRSSPLGDITNQNNTHSHSQANESQVKRRLLDSYPDSGYGNTQVETVEATLQVDGQHGGSQNSVCSSGGGSVMDVETTESCANVELNSICEVLKSSNAKATLMAKFKELYGISYNELVRVFKSDKTCCIDWVCALFGVSPMVAENLKTLIKPFCMYYHIQCLSCDWGTIVLMLIRFSCAKNRTTIAKCLSTLVNIPQSQMFIEPPKLRSTPVALYFYRTGISNISNTYGETPEWITRQTQLQHSFEDSTFELSQMVQWAFDHEVLDDSEIAFHYAQLADIDSNAAAFLKSNCQAKYVKDCGTMARHYKRAQRKSLSMSAWIRYRCDRAKDGGNWREIAKFLRYQGVNFMSFIQMFKQFLKGTPKHNCIVIYGPPNTGKSLFAMSLMKFMQGSIISYVNSGSHFWLQPLEDAKIALLDDATYGCWTYIDQYLRNFLDGNPCSIDRKHRSLIQLVCPPLLITSNINPQEDANLMYLHTRVTVLKFLNTFPFDNNGNAVYTLNDENWKNFFSTTWSRLDLEEEEDKENGDPMPPFKCVPGENTRLL</sequence>